<accession>P15706</accession>
<gene>
    <name type="primary">gp63</name>
</gene>
<sequence length="599" mass="63848">MSVDSSSTHRHRSVAARLVRLAAAGAAVIAAVGTAAAWAHAGAVQHRCIHDAMQARVRQSVARHHTAPGAVSAVGLPYVTLDTAAAADRRPGSAPTVVRAANWGALRIAVSTEDLTDPAYHCARVGQHIKRRLGGVDICTAEDILTDEKRDILVKHLIPQALQLHTERLKVRQVQDKWKVTGMGDDVCSDFKVPPAHITDGLSNTDFVMYVASVPSEEGVLAWATTCQVFSDGHPAVGVINIPAANIASRYDQLVTRVVTHEMAHALGFSVGFFEGARILESISNVRHKDFDVPVINSSTAVAKAREQYGCDTLEYLEIEDQGGAGSAGSHIKMRNAQDELMAPAAAAGYYSALTMAIFQDLGFYQADFSKAEVMPWGRNAGCAFLSEKCMERNITKWPAMFCNENEVTMRCPTSRLSLGKCGVTRHPDLPPYWQYFTDPSLAGISAFMDCCPVVEPYGDGSCAQRASEAGAPFKGFNVFSDAARCIDGAFRPKTSHGIIKSYAGLCANVRCDTATRTYSVQVHGGSGYANCTPGLRVELSTVSSAFEEGGYITCPPYVEVCQGNVQAAKDGGNAAAGRRGPRAAATALLVAALLAVAL</sequence>
<protein>
    <recommendedName>
        <fullName>Leishmanolysin</fullName>
        <ecNumber>3.4.24.36</ecNumber>
    </recommendedName>
    <alternativeName>
        <fullName>Cell surface protease</fullName>
    </alternativeName>
    <alternativeName>
        <fullName>Major surface glycoprotein</fullName>
    </alternativeName>
    <alternativeName>
        <fullName>Major surface protease</fullName>
    </alternativeName>
    <alternativeName>
        <fullName>Promastigote surface endopeptidase</fullName>
    </alternativeName>
    <alternativeName>
        <fullName>Protein gp63</fullName>
    </alternativeName>
</protein>
<reference key="1">
    <citation type="journal article" date="1990" name="Mol. Biochem. Parasitol.">
        <title>Leishmania gp63 molecule implicated in cellular adhesion lacks an Arg-Gly-Asp sequence.</title>
        <authorList>
            <person name="Miller R.A."/>
            <person name="Reed S.G."/>
            <person name="Parsons M."/>
        </authorList>
    </citation>
    <scope>NUCLEOTIDE SEQUENCE [GENOMIC DNA]</scope>
</reference>
<reference key="2">
    <citation type="journal article" date="1992" name="J. Biol. Chem.">
        <title>Three distinct RNAs for the surface protease gp63 are differentially expressed during development of Leishmania donovani chagasi promastigotes to an infectious form.</title>
        <authorList>
            <person name="Ramamoorthy R."/>
            <person name="Donelson J.E."/>
            <person name="Paetz K.E."/>
            <person name="Maybodi M."/>
            <person name="Roberts S.C."/>
            <person name="Wilson M.E."/>
        </authorList>
    </citation>
    <scope>NUCLEOTIDE SEQUENCE [MRNA]</scope>
</reference>
<evidence type="ECO:0000250" key="1">
    <source>
        <dbReference type="UniProtKB" id="P08148"/>
    </source>
</evidence>
<evidence type="ECO:0000255" key="2"/>
<evidence type="ECO:0000255" key="3">
    <source>
        <dbReference type="PROSITE-ProRule" id="PRU00498"/>
    </source>
</evidence>
<evidence type="ECO:0000255" key="4">
    <source>
        <dbReference type="PROSITE-ProRule" id="PRU10095"/>
    </source>
</evidence>
<evidence type="ECO:0000305" key="5"/>
<dbReference type="EC" id="3.4.24.36"/>
<dbReference type="EMBL" id="M80672">
    <property type="protein sequence ID" value="AAA29238.1"/>
    <property type="molecule type" value="mRNA"/>
</dbReference>
<dbReference type="EMBL" id="M28527">
    <property type="protein sequence ID" value="AAA29235.1"/>
    <property type="molecule type" value="Genomic_DNA"/>
</dbReference>
<dbReference type="PIR" id="A44951">
    <property type="entry name" value="A44951"/>
</dbReference>
<dbReference type="SMR" id="P15706"/>
<dbReference type="MEROPS" id="M08.001"/>
<dbReference type="GlyCosmos" id="P15706">
    <property type="glycosylation" value="2 sites, No reported glycans"/>
</dbReference>
<dbReference type="BRENDA" id="3.4.24.36">
    <property type="organism ID" value="8755"/>
</dbReference>
<dbReference type="GO" id="GO:0005737">
    <property type="term" value="C:cytoplasm"/>
    <property type="evidence" value="ECO:0007669"/>
    <property type="project" value="TreeGrafter"/>
</dbReference>
<dbReference type="GO" id="GO:0005886">
    <property type="term" value="C:plasma membrane"/>
    <property type="evidence" value="ECO:0007669"/>
    <property type="project" value="UniProtKB-SubCell"/>
</dbReference>
<dbReference type="GO" id="GO:0098552">
    <property type="term" value="C:side of membrane"/>
    <property type="evidence" value="ECO:0007669"/>
    <property type="project" value="UniProtKB-KW"/>
</dbReference>
<dbReference type="GO" id="GO:0046872">
    <property type="term" value="F:metal ion binding"/>
    <property type="evidence" value="ECO:0007669"/>
    <property type="project" value="UniProtKB-KW"/>
</dbReference>
<dbReference type="GO" id="GO:0004222">
    <property type="term" value="F:metalloendopeptidase activity"/>
    <property type="evidence" value="ECO:0007669"/>
    <property type="project" value="InterPro"/>
</dbReference>
<dbReference type="GO" id="GO:0007155">
    <property type="term" value="P:cell adhesion"/>
    <property type="evidence" value="ECO:0007669"/>
    <property type="project" value="UniProtKB-KW"/>
</dbReference>
<dbReference type="GO" id="GO:0006508">
    <property type="term" value="P:proteolysis"/>
    <property type="evidence" value="ECO:0007669"/>
    <property type="project" value="UniProtKB-KW"/>
</dbReference>
<dbReference type="FunFam" id="3.90.132.10:FF:000001">
    <property type="entry name" value="leishmanolysin-like peptidase isoform X2"/>
    <property type="match status" value="1"/>
</dbReference>
<dbReference type="FunFam" id="3.10.170.20:FF:000005">
    <property type="entry name" value="MSP-A1 surface protease homolog"/>
    <property type="match status" value="1"/>
</dbReference>
<dbReference type="Gene3D" id="3.10.170.20">
    <property type="match status" value="1"/>
</dbReference>
<dbReference type="Gene3D" id="3.90.132.10">
    <property type="entry name" value="Leishmanolysin , domain 2"/>
    <property type="match status" value="1"/>
</dbReference>
<dbReference type="Gene3D" id="2.10.55.10">
    <property type="entry name" value="Leishmanolysin domain 3"/>
    <property type="match status" value="1"/>
</dbReference>
<dbReference type="Gene3D" id="2.30.34.10">
    <property type="entry name" value="Leishmanolysin domain 4"/>
    <property type="match status" value="1"/>
</dbReference>
<dbReference type="InterPro" id="IPR001577">
    <property type="entry name" value="Peptidase_M8"/>
</dbReference>
<dbReference type="PANTHER" id="PTHR10942">
    <property type="entry name" value="LEISHMANOLYSIN-LIKE PEPTIDASE"/>
    <property type="match status" value="1"/>
</dbReference>
<dbReference type="PANTHER" id="PTHR10942:SF0">
    <property type="entry name" value="LEISHMANOLYSIN-LIKE PEPTIDASE"/>
    <property type="match status" value="1"/>
</dbReference>
<dbReference type="Pfam" id="PF01457">
    <property type="entry name" value="Peptidase_M8"/>
    <property type="match status" value="1"/>
</dbReference>
<dbReference type="PRINTS" id="PR00782">
    <property type="entry name" value="LSHMANOLYSIN"/>
</dbReference>
<dbReference type="SUPFAM" id="SSF55486">
    <property type="entry name" value="Metalloproteases ('zincins'), catalytic domain"/>
    <property type="match status" value="1"/>
</dbReference>
<dbReference type="PROSITE" id="PS00142">
    <property type="entry name" value="ZINC_PROTEASE"/>
    <property type="match status" value="1"/>
</dbReference>
<name>GP63_LEICH</name>
<proteinExistence type="evidence at transcript level"/>
<comment type="function">
    <text>Has an integral role during the infection of macrophages in the mammalian host.</text>
</comment>
<comment type="catalytic activity">
    <reaction>
        <text>Preference for hydrophobic residues at P1 and P1' and basic residues at P2' and P3'. A model nonapeptide is cleaved at -Ala-Tyr-|-Leu-Lys-Lys-.</text>
        <dbReference type="EC" id="3.4.24.36"/>
    </reaction>
</comment>
<comment type="cofactor">
    <cofactor evidence="1">
        <name>Zn(2+)</name>
        <dbReference type="ChEBI" id="CHEBI:29105"/>
    </cofactor>
    <text evidence="1">Binds 1 zinc ion per subunit.</text>
</comment>
<comment type="subcellular location">
    <subcellularLocation>
        <location>Cell membrane</location>
        <topology>Lipid-anchor</topology>
        <topology>GPI-anchor</topology>
    </subcellularLocation>
</comment>
<comment type="similarity">
    <text evidence="5">Belongs to the peptidase M8 family.</text>
</comment>
<feature type="signal peptide" evidence="2">
    <location>
        <begin position="1"/>
        <end position="39"/>
    </location>
</feature>
<feature type="propeptide" id="PRO_0000028658" description="Activation peptide" evidence="1">
    <location>
        <begin position="40"/>
        <end position="97"/>
    </location>
</feature>
<feature type="chain" id="PRO_0000028659" description="Leishmanolysin">
    <location>
        <begin position="98"/>
        <end position="574"/>
    </location>
</feature>
<feature type="propeptide" id="PRO_0000028660" description="Removed in mature form" evidence="1">
    <location>
        <begin position="575"/>
        <end position="599"/>
    </location>
</feature>
<feature type="active site" evidence="4">
    <location>
        <position position="262"/>
    </location>
</feature>
<feature type="binding site" evidence="4">
    <location>
        <position position="261"/>
    </location>
    <ligand>
        <name>Zn(2+)</name>
        <dbReference type="ChEBI" id="CHEBI:29105"/>
        <note>catalytic</note>
    </ligand>
</feature>
<feature type="binding site" evidence="4">
    <location>
        <position position="265"/>
    </location>
    <ligand>
        <name>Zn(2+)</name>
        <dbReference type="ChEBI" id="CHEBI:29105"/>
        <note>catalytic</note>
    </ligand>
</feature>
<feature type="binding site" evidence="4">
    <location>
        <position position="331"/>
    </location>
    <ligand>
        <name>Zn(2+)</name>
        <dbReference type="ChEBI" id="CHEBI:29105"/>
        <note>catalytic</note>
    </ligand>
</feature>
<feature type="lipid moiety-binding region" description="GPI-anchor amidated asparagine" evidence="1">
    <location>
        <position position="574"/>
    </location>
</feature>
<feature type="glycosylation site" description="N-linked (GlcNAc...) asparagine" evidence="3">
    <location>
        <position position="297"/>
    </location>
</feature>
<feature type="glycosylation site" description="N-linked (GlcNAc...) asparagine" evidence="3">
    <location>
        <position position="394"/>
    </location>
</feature>
<feature type="disulfide bond" evidence="1">
    <location>
        <begin position="122"/>
        <end position="139"/>
    </location>
</feature>
<feature type="disulfide bond" evidence="1">
    <location>
        <begin position="188"/>
        <end position="227"/>
    </location>
</feature>
<feature type="disulfide bond" evidence="1">
    <location>
        <begin position="311"/>
        <end position="383"/>
    </location>
</feature>
<feature type="disulfide bond" evidence="1">
    <location>
        <begin position="390"/>
        <end position="452"/>
    </location>
</feature>
<feature type="disulfide bond" evidence="1">
    <location>
        <begin position="403"/>
        <end position="422"/>
    </location>
</feature>
<feature type="disulfide bond" evidence="1">
    <location>
        <begin position="412"/>
        <end position="486"/>
    </location>
</feature>
<feature type="disulfide bond" evidence="1">
    <location>
        <begin position="463"/>
        <end position="507"/>
    </location>
</feature>
<feature type="disulfide bond" evidence="1">
    <location>
        <begin position="512"/>
        <end position="562"/>
    </location>
</feature>
<feature type="disulfide bond" evidence="1">
    <location>
        <begin position="532"/>
        <end position="555"/>
    </location>
</feature>
<organism>
    <name type="scientific">Leishmania chagasi</name>
    <dbReference type="NCBI Taxonomy" id="44271"/>
    <lineage>
        <taxon>Eukaryota</taxon>
        <taxon>Discoba</taxon>
        <taxon>Euglenozoa</taxon>
        <taxon>Kinetoplastea</taxon>
        <taxon>Metakinetoplastina</taxon>
        <taxon>Trypanosomatida</taxon>
        <taxon>Trypanosomatidae</taxon>
        <taxon>Leishmaniinae</taxon>
        <taxon>Leishmania</taxon>
    </lineage>
</organism>
<keyword id="KW-0130">Cell adhesion</keyword>
<keyword id="KW-1003">Cell membrane</keyword>
<keyword id="KW-1015">Disulfide bond</keyword>
<keyword id="KW-0325">Glycoprotein</keyword>
<keyword id="KW-0336">GPI-anchor</keyword>
<keyword id="KW-0378">Hydrolase</keyword>
<keyword id="KW-0449">Lipoprotein</keyword>
<keyword id="KW-0472">Membrane</keyword>
<keyword id="KW-0479">Metal-binding</keyword>
<keyword id="KW-0482">Metalloprotease</keyword>
<keyword id="KW-0645">Protease</keyword>
<keyword id="KW-0732">Signal</keyword>
<keyword id="KW-0862">Zinc</keyword>
<keyword id="KW-0865">Zymogen</keyword>